<organism>
    <name type="scientific">Thermoplasma volcanium (strain ATCC 51530 / DSM 4299 / JCM 9571 / NBRC 15438 / GSS1)</name>
    <dbReference type="NCBI Taxonomy" id="273116"/>
    <lineage>
        <taxon>Archaea</taxon>
        <taxon>Methanobacteriati</taxon>
        <taxon>Thermoplasmatota</taxon>
        <taxon>Thermoplasmata</taxon>
        <taxon>Thermoplasmatales</taxon>
        <taxon>Thermoplasmataceae</taxon>
        <taxon>Thermoplasma</taxon>
    </lineage>
</organism>
<proteinExistence type="inferred from homology"/>
<comment type="function">
    <text evidence="1">Catalyzes the ATP-dependent transfer of a sulfur to tRNA to produce 4-thiouridine in position 8 of tRNAs, which functions as a near-UV photosensor. Also catalyzes the transfer of sulfur to the sulfur carrier protein ThiS, forming ThiS-thiocarboxylate. This is a step in the synthesis of thiazole, in the thiamine biosynthesis pathway. The sulfur is donated as persulfide by IscS.</text>
</comment>
<comment type="catalytic activity">
    <reaction evidence="1">
        <text>[ThiI sulfur-carrier protein]-S-sulfanyl-L-cysteine + a uridine in tRNA + 2 reduced [2Fe-2S]-[ferredoxin] + ATP + H(+) = [ThiI sulfur-carrier protein]-L-cysteine + a 4-thiouridine in tRNA + 2 oxidized [2Fe-2S]-[ferredoxin] + AMP + diphosphate</text>
        <dbReference type="Rhea" id="RHEA:24176"/>
        <dbReference type="Rhea" id="RHEA-COMP:10000"/>
        <dbReference type="Rhea" id="RHEA-COMP:10001"/>
        <dbReference type="Rhea" id="RHEA-COMP:13337"/>
        <dbReference type="Rhea" id="RHEA-COMP:13338"/>
        <dbReference type="Rhea" id="RHEA-COMP:13339"/>
        <dbReference type="Rhea" id="RHEA-COMP:13340"/>
        <dbReference type="ChEBI" id="CHEBI:15378"/>
        <dbReference type="ChEBI" id="CHEBI:29950"/>
        <dbReference type="ChEBI" id="CHEBI:30616"/>
        <dbReference type="ChEBI" id="CHEBI:33019"/>
        <dbReference type="ChEBI" id="CHEBI:33737"/>
        <dbReference type="ChEBI" id="CHEBI:33738"/>
        <dbReference type="ChEBI" id="CHEBI:61963"/>
        <dbReference type="ChEBI" id="CHEBI:65315"/>
        <dbReference type="ChEBI" id="CHEBI:136798"/>
        <dbReference type="ChEBI" id="CHEBI:456215"/>
        <dbReference type="EC" id="2.8.1.4"/>
    </reaction>
</comment>
<comment type="catalytic activity">
    <reaction evidence="1">
        <text>[ThiS sulfur-carrier protein]-C-terminal Gly-Gly-AMP + S-sulfanyl-L-cysteinyl-[cysteine desulfurase] + AH2 = [ThiS sulfur-carrier protein]-C-terminal-Gly-aminoethanethioate + L-cysteinyl-[cysteine desulfurase] + A + AMP + 2 H(+)</text>
        <dbReference type="Rhea" id="RHEA:43340"/>
        <dbReference type="Rhea" id="RHEA-COMP:12157"/>
        <dbReference type="Rhea" id="RHEA-COMP:12158"/>
        <dbReference type="Rhea" id="RHEA-COMP:12910"/>
        <dbReference type="Rhea" id="RHEA-COMP:19908"/>
        <dbReference type="ChEBI" id="CHEBI:13193"/>
        <dbReference type="ChEBI" id="CHEBI:15378"/>
        <dbReference type="ChEBI" id="CHEBI:17499"/>
        <dbReference type="ChEBI" id="CHEBI:29950"/>
        <dbReference type="ChEBI" id="CHEBI:61963"/>
        <dbReference type="ChEBI" id="CHEBI:90618"/>
        <dbReference type="ChEBI" id="CHEBI:232372"/>
        <dbReference type="ChEBI" id="CHEBI:456215"/>
    </reaction>
</comment>
<comment type="pathway">
    <text evidence="1">Cofactor biosynthesis; thiamine diphosphate biosynthesis.</text>
</comment>
<comment type="subcellular location">
    <subcellularLocation>
        <location evidence="1">Cytoplasm</location>
    </subcellularLocation>
</comment>
<comment type="similarity">
    <text evidence="1">Belongs to the ThiI family.</text>
</comment>
<protein>
    <recommendedName>
        <fullName evidence="1">tRNA sulfurtransferase</fullName>
        <ecNumber evidence="1">2.8.1.4</ecNumber>
    </recommendedName>
    <alternativeName>
        <fullName evidence="1">Sulfur carrier protein ThiS sulfurtransferase</fullName>
    </alternativeName>
    <alternativeName>
        <fullName evidence="1">Thiamine biosynthesis protein ThiI</fullName>
    </alternativeName>
    <alternativeName>
        <fullName evidence="1">tRNA 4-thiouridine synthase</fullName>
    </alternativeName>
</protein>
<keyword id="KW-0067">ATP-binding</keyword>
<keyword id="KW-0963">Cytoplasm</keyword>
<keyword id="KW-1015">Disulfide bond</keyword>
<keyword id="KW-0547">Nucleotide-binding</keyword>
<keyword id="KW-0676">Redox-active center</keyword>
<keyword id="KW-0694">RNA-binding</keyword>
<keyword id="KW-0784">Thiamine biosynthesis</keyword>
<keyword id="KW-0808">Transferase</keyword>
<keyword id="KW-0820">tRNA-binding</keyword>
<sequence>MKTYLVRYSEIGLKGDRERARMERILADNIINYYKKIGYEARCQLLAGRLLVEAENDIPLSKVFGIKSYSECIRIKFENQEDIVKKVHALYEEKVKGKTFGVRCRRTGTHSFTSIDMEKAIGDALYSISNGVDLKSPEVWIHVDIVGKDALIYDKIYKGPGGLPLGSEGKLISMVSGGIDSPVATWLMMKRGSPCDIFFCSLADPIDTQAFLEIAKKLVERWSPYRDGNVFIADCRDLIRDMVIEKKTNFNNVTFKKVLYRLAERLAEKYRYLGIVTGESLGQVSSQTAENLLSIEHGINFPIYRPLIGLDKDEITAIARDIGTFPEKNVGEFCSLFSAHPVTRSKWEDIEEDVKKIDIEKFIERVTAIKFSEIGKIVINSDLMLNKNLEDAVFIDLRKKDLYEKSHYQGARHLDLEQALAINDTSKKYVFYCSMGLQSAYVASVLRERGIEAYFTTFSKLSKQKGSVDETIGKRV</sequence>
<reference key="1">
    <citation type="journal article" date="2000" name="Proc. Natl. Acad. Sci. U.S.A.">
        <title>Archaeal adaptation to higher temperatures revealed by genomic sequence of Thermoplasma volcanium.</title>
        <authorList>
            <person name="Kawashima T."/>
            <person name="Amano N."/>
            <person name="Koike H."/>
            <person name="Makino S."/>
            <person name="Higuchi S."/>
            <person name="Kawashima-Ohya Y."/>
            <person name="Watanabe K."/>
            <person name="Yamazaki M."/>
            <person name="Kanehori K."/>
            <person name="Kawamoto T."/>
            <person name="Nunoshiba T."/>
            <person name="Yamamoto Y."/>
            <person name="Aramaki H."/>
            <person name="Makino K."/>
            <person name="Suzuki M."/>
        </authorList>
    </citation>
    <scope>NUCLEOTIDE SEQUENCE [LARGE SCALE GENOMIC DNA]</scope>
    <source>
        <strain>ATCC 51530 / DSM 4299 / JCM 9571 / NBRC 15438 / GSS1</strain>
    </source>
</reference>
<feature type="chain" id="PRO_0000154903" description="tRNA sulfurtransferase">
    <location>
        <begin position="1"/>
        <end position="476"/>
    </location>
</feature>
<feature type="domain" description="THUMP" evidence="1">
    <location>
        <begin position="54"/>
        <end position="156"/>
    </location>
</feature>
<feature type="domain" description="Rhodanese" evidence="1">
    <location>
        <begin position="388"/>
        <end position="470"/>
    </location>
</feature>
<feature type="active site" description="Cysteine persulfide intermediate" evidence="1">
    <location>
        <position position="433"/>
    </location>
</feature>
<feature type="binding site" evidence="1">
    <location>
        <begin position="174"/>
        <end position="175"/>
    </location>
    <ligand>
        <name>ATP</name>
        <dbReference type="ChEBI" id="CHEBI:30616"/>
    </ligand>
</feature>
<feature type="binding site" evidence="1">
    <location>
        <position position="256"/>
    </location>
    <ligand>
        <name>ATP</name>
        <dbReference type="ChEBI" id="CHEBI:30616"/>
    </ligand>
</feature>
<feature type="binding site" evidence="1">
    <location>
        <position position="278"/>
    </location>
    <ligand>
        <name>ATP</name>
        <dbReference type="ChEBI" id="CHEBI:30616"/>
    </ligand>
</feature>
<feature type="binding site" evidence="1">
    <location>
        <position position="287"/>
    </location>
    <ligand>
        <name>ATP</name>
        <dbReference type="ChEBI" id="CHEBI:30616"/>
    </ligand>
</feature>
<feature type="disulfide bond" description="Redox-active" evidence="1">
    <location>
        <begin position="334"/>
        <end position="433"/>
    </location>
</feature>
<accession>Q97AK6</accession>
<evidence type="ECO:0000255" key="1">
    <source>
        <dbReference type="HAMAP-Rule" id="MF_00021"/>
    </source>
</evidence>
<dbReference type="EC" id="2.8.1.4" evidence="1"/>
<dbReference type="EMBL" id="BA000011">
    <property type="protein sequence ID" value="BAB59946.1"/>
    <property type="molecule type" value="Genomic_DNA"/>
</dbReference>
<dbReference type="RefSeq" id="WP_010917048.1">
    <property type="nucleotide sequence ID" value="NC_002689.2"/>
</dbReference>
<dbReference type="SMR" id="Q97AK6"/>
<dbReference type="STRING" id="273116.gene:9381594"/>
<dbReference type="PaxDb" id="273116-14325020"/>
<dbReference type="GeneID" id="1441896"/>
<dbReference type="KEGG" id="tvo:TVG0805746"/>
<dbReference type="eggNOG" id="arCOG00038">
    <property type="taxonomic scope" value="Archaea"/>
</dbReference>
<dbReference type="eggNOG" id="arCOG02021">
    <property type="taxonomic scope" value="Archaea"/>
</dbReference>
<dbReference type="HOGENOM" id="CLU_037952_4_1_2"/>
<dbReference type="OrthoDB" id="372227at2157"/>
<dbReference type="PhylomeDB" id="Q97AK6"/>
<dbReference type="UniPathway" id="UPA00060"/>
<dbReference type="Proteomes" id="UP000001017">
    <property type="component" value="Chromosome"/>
</dbReference>
<dbReference type="GO" id="GO:0005829">
    <property type="term" value="C:cytosol"/>
    <property type="evidence" value="ECO:0007669"/>
    <property type="project" value="TreeGrafter"/>
</dbReference>
<dbReference type="GO" id="GO:0005524">
    <property type="term" value="F:ATP binding"/>
    <property type="evidence" value="ECO:0007669"/>
    <property type="project" value="UniProtKB-UniRule"/>
</dbReference>
<dbReference type="GO" id="GO:0004810">
    <property type="term" value="F:CCA tRNA nucleotidyltransferase activity"/>
    <property type="evidence" value="ECO:0007669"/>
    <property type="project" value="InterPro"/>
</dbReference>
<dbReference type="GO" id="GO:0000049">
    <property type="term" value="F:tRNA binding"/>
    <property type="evidence" value="ECO:0007669"/>
    <property type="project" value="UniProtKB-UniRule"/>
</dbReference>
<dbReference type="GO" id="GO:0140741">
    <property type="term" value="F:tRNA-uracil-4 sulfurtransferase activity"/>
    <property type="evidence" value="ECO:0007669"/>
    <property type="project" value="UniProtKB-EC"/>
</dbReference>
<dbReference type="GO" id="GO:0009228">
    <property type="term" value="P:thiamine biosynthetic process"/>
    <property type="evidence" value="ECO:0007669"/>
    <property type="project" value="UniProtKB-KW"/>
</dbReference>
<dbReference type="GO" id="GO:0009229">
    <property type="term" value="P:thiamine diphosphate biosynthetic process"/>
    <property type="evidence" value="ECO:0007669"/>
    <property type="project" value="UniProtKB-UniRule"/>
</dbReference>
<dbReference type="GO" id="GO:0052837">
    <property type="term" value="P:thiazole biosynthetic process"/>
    <property type="evidence" value="ECO:0007669"/>
    <property type="project" value="TreeGrafter"/>
</dbReference>
<dbReference type="GO" id="GO:0002937">
    <property type="term" value="P:tRNA 4-thiouridine biosynthesis"/>
    <property type="evidence" value="ECO:0007669"/>
    <property type="project" value="TreeGrafter"/>
</dbReference>
<dbReference type="CDD" id="cd11716">
    <property type="entry name" value="THUMP_ThiI"/>
    <property type="match status" value="1"/>
</dbReference>
<dbReference type="Gene3D" id="3.30.2130.30">
    <property type="match status" value="1"/>
</dbReference>
<dbReference type="Gene3D" id="3.40.50.620">
    <property type="entry name" value="HUPs"/>
    <property type="match status" value="1"/>
</dbReference>
<dbReference type="Gene3D" id="3.40.250.10">
    <property type="entry name" value="Rhodanese-like domain"/>
    <property type="match status" value="1"/>
</dbReference>
<dbReference type="HAMAP" id="MF_00021">
    <property type="entry name" value="ThiI"/>
    <property type="match status" value="1"/>
</dbReference>
<dbReference type="InterPro" id="IPR001763">
    <property type="entry name" value="Rhodanese-like_dom"/>
</dbReference>
<dbReference type="InterPro" id="IPR036873">
    <property type="entry name" value="Rhodanese-like_dom_sf"/>
</dbReference>
<dbReference type="InterPro" id="IPR014729">
    <property type="entry name" value="Rossmann-like_a/b/a_fold"/>
</dbReference>
<dbReference type="InterPro" id="IPR020536">
    <property type="entry name" value="ThiI_AANH"/>
</dbReference>
<dbReference type="InterPro" id="IPR054173">
    <property type="entry name" value="ThiI_fer"/>
</dbReference>
<dbReference type="InterPro" id="IPR049961">
    <property type="entry name" value="ThiI_N"/>
</dbReference>
<dbReference type="InterPro" id="IPR004114">
    <property type="entry name" value="THUMP_dom"/>
</dbReference>
<dbReference type="InterPro" id="IPR049962">
    <property type="entry name" value="THUMP_ThiI"/>
</dbReference>
<dbReference type="InterPro" id="IPR003720">
    <property type="entry name" value="tRNA_STrfase"/>
</dbReference>
<dbReference type="InterPro" id="IPR050102">
    <property type="entry name" value="tRNA_sulfurtransferase_ThiI"/>
</dbReference>
<dbReference type="NCBIfam" id="TIGR00342">
    <property type="entry name" value="tRNA uracil 4-sulfurtransferase ThiI"/>
    <property type="match status" value="1"/>
</dbReference>
<dbReference type="PANTHER" id="PTHR43209">
    <property type="entry name" value="TRNA SULFURTRANSFERASE"/>
    <property type="match status" value="1"/>
</dbReference>
<dbReference type="PANTHER" id="PTHR43209:SF1">
    <property type="entry name" value="TRNA SULFURTRANSFERASE"/>
    <property type="match status" value="1"/>
</dbReference>
<dbReference type="Pfam" id="PF00581">
    <property type="entry name" value="Rhodanese"/>
    <property type="match status" value="1"/>
</dbReference>
<dbReference type="Pfam" id="PF02568">
    <property type="entry name" value="ThiI"/>
    <property type="match status" value="1"/>
</dbReference>
<dbReference type="Pfam" id="PF22025">
    <property type="entry name" value="ThiI_fer"/>
    <property type="match status" value="1"/>
</dbReference>
<dbReference type="Pfam" id="PF02926">
    <property type="entry name" value="THUMP"/>
    <property type="match status" value="1"/>
</dbReference>
<dbReference type="SMART" id="SM00450">
    <property type="entry name" value="RHOD"/>
    <property type="match status" value="1"/>
</dbReference>
<dbReference type="SMART" id="SM00981">
    <property type="entry name" value="THUMP"/>
    <property type="match status" value="1"/>
</dbReference>
<dbReference type="SUPFAM" id="SSF52402">
    <property type="entry name" value="Adenine nucleotide alpha hydrolases-like"/>
    <property type="match status" value="1"/>
</dbReference>
<dbReference type="SUPFAM" id="SSF52821">
    <property type="entry name" value="Rhodanese/Cell cycle control phosphatase"/>
    <property type="match status" value="1"/>
</dbReference>
<dbReference type="SUPFAM" id="SSF143437">
    <property type="entry name" value="THUMP domain-like"/>
    <property type="match status" value="1"/>
</dbReference>
<dbReference type="PROSITE" id="PS50206">
    <property type="entry name" value="RHODANESE_3"/>
    <property type="match status" value="1"/>
</dbReference>
<dbReference type="PROSITE" id="PS51165">
    <property type="entry name" value="THUMP"/>
    <property type="match status" value="1"/>
</dbReference>
<name>THII_THEVO</name>
<gene>
    <name evidence="1" type="primary">thiI</name>
    <name type="ordered locus">TV0804</name>
    <name type="ORF">TVG0805746</name>
</gene>